<reference key="1">
    <citation type="submission" date="2006-06" db="EMBL/GenBank/DDBJ databases">
        <title>Complete sequence of Pseudoalteromonas atlantica T6c.</title>
        <authorList>
            <consortium name="US DOE Joint Genome Institute"/>
            <person name="Copeland A."/>
            <person name="Lucas S."/>
            <person name="Lapidus A."/>
            <person name="Barry K."/>
            <person name="Detter J.C."/>
            <person name="Glavina del Rio T."/>
            <person name="Hammon N."/>
            <person name="Israni S."/>
            <person name="Dalin E."/>
            <person name="Tice H."/>
            <person name="Pitluck S."/>
            <person name="Saunders E."/>
            <person name="Brettin T."/>
            <person name="Bruce D."/>
            <person name="Han C."/>
            <person name="Tapia R."/>
            <person name="Gilna P."/>
            <person name="Schmutz J."/>
            <person name="Larimer F."/>
            <person name="Land M."/>
            <person name="Hauser L."/>
            <person name="Kyrpides N."/>
            <person name="Kim E."/>
            <person name="Karls A.C."/>
            <person name="Bartlett D."/>
            <person name="Higgins B.P."/>
            <person name="Richardson P."/>
        </authorList>
    </citation>
    <scope>NUCLEOTIDE SEQUENCE [LARGE SCALE GENOMIC DNA]</scope>
    <source>
        <strain>T6c / ATCC BAA-1087</strain>
    </source>
</reference>
<accession>Q15R47</accession>
<comment type="function">
    <text evidence="1">ATP-dependent specificity component of the Clp protease. It directs the protease to specific substrates. Can perform chaperone functions in the absence of ClpP.</text>
</comment>
<comment type="subunit">
    <text evidence="1">Component of the ClpX-ClpP complex. Forms a hexameric ring that, in the presence of ATP, binds to fourteen ClpP subunits assembled into a disk-like structure with a central cavity, resembling the structure of eukaryotic proteasomes.</text>
</comment>
<comment type="similarity">
    <text evidence="1">Belongs to the ClpX chaperone family.</text>
</comment>
<gene>
    <name evidence="1" type="primary">clpX</name>
    <name type="ordered locus">Patl_3135</name>
</gene>
<name>CLPX_PSEA6</name>
<sequence length="425" mass="46817">MSDKQSGDGDNKLLYCSFCGKSQHEVRKLIAGPSVFVCDECVELCNDIIREEIKEIAPKQKQDELPTPKEIHSHLDDYVIGQEHAKKVLSVAVYNHYKRLRNGDVHDGVELGKSNILLMGPTGSGKTLLAETLARLLDVPFTMADATTLTEAGYVGEDVENIIQKLLQKCDYDVEKAQRGIVYIDEIDKISRKSDNPSITRDVSGEGVQQALLKLIEGTIASVPPQGGRKHPQQEFLQVDTSKILFICGGAFAGLDKVIEQRAHTGTGIGFGTAIKDSSNKSKEGELLKKVEPEDLVKYGLIPEFIGRLPVLTSLEELSEEALIQILREPKNSLTKQYAALFSLEDTELEFREDALQAIAKKAMSRKTGARGLRSIVEAVLLDTMYELPSMSNVSKVVVDETVIRGESKPILIYDSAADKKSISE</sequence>
<proteinExistence type="inferred from homology"/>
<organism>
    <name type="scientific">Pseudoalteromonas atlantica (strain T6c / ATCC BAA-1087)</name>
    <dbReference type="NCBI Taxonomy" id="3042615"/>
    <lineage>
        <taxon>Bacteria</taxon>
        <taxon>Pseudomonadati</taxon>
        <taxon>Pseudomonadota</taxon>
        <taxon>Gammaproteobacteria</taxon>
        <taxon>Alteromonadales</taxon>
        <taxon>Alteromonadaceae</taxon>
        <taxon>Paraglaciecola</taxon>
    </lineage>
</organism>
<feature type="chain" id="PRO_1000024620" description="ATP-dependent Clp protease ATP-binding subunit ClpX">
    <location>
        <begin position="1"/>
        <end position="425"/>
    </location>
</feature>
<feature type="domain" description="ClpX-type ZB" evidence="2">
    <location>
        <begin position="3"/>
        <end position="57"/>
    </location>
</feature>
<feature type="binding site" evidence="2">
    <location>
        <position position="16"/>
    </location>
    <ligand>
        <name>Zn(2+)</name>
        <dbReference type="ChEBI" id="CHEBI:29105"/>
    </ligand>
</feature>
<feature type="binding site" evidence="2">
    <location>
        <position position="19"/>
    </location>
    <ligand>
        <name>Zn(2+)</name>
        <dbReference type="ChEBI" id="CHEBI:29105"/>
    </ligand>
</feature>
<feature type="binding site" evidence="2">
    <location>
        <position position="38"/>
    </location>
    <ligand>
        <name>Zn(2+)</name>
        <dbReference type="ChEBI" id="CHEBI:29105"/>
    </ligand>
</feature>
<feature type="binding site" evidence="2">
    <location>
        <position position="41"/>
    </location>
    <ligand>
        <name>Zn(2+)</name>
        <dbReference type="ChEBI" id="CHEBI:29105"/>
    </ligand>
</feature>
<feature type="binding site" evidence="1">
    <location>
        <begin position="121"/>
        <end position="128"/>
    </location>
    <ligand>
        <name>ATP</name>
        <dbReference type="ChEBI" id="CHEBI:30616"/>
    </ligand>
</feature>
<dbReference type="EMBL" id="CP000388">
    <property type="protein sequence ID" value="ABG41641.1"/>
    <property type="molecule type" value="Genomic_DNA"/>
</dbReference>
<dbReference type="RefSeq" id="WP_011575877.1">
    <property type="nucleotide sequence ID" value="NC_008228.1"/>
</dbReference>
<dbReference type="SMR" id="Q15R47"/>
<dbReference type="STRING" id="342610.Patl_3135"/>
<dbReference type="KEGG" id="pat:Patl_3135"/>
<dbReference type="eggNOG" id="COG1219">
    <property type="taxonomic scope" value="Bacteria"/>
</dbReference>
<dbReference type="HOGENOM" id="CLU_014218_8_2_6"/>
<dbReference type="OrthoDB" id="9804062at2"/>
<dbReference type="Proteomes" id="UP000001981">
    <property type="component" value="Chromosome"/>
</dbReference>
<dbReference type="GO" id="GO:0009376">
    <property type="term" value="C:HslUV protease complex"/>
    <property type="evidence" value="ECO:0007669"/>
    <property type="project" value="TreeGrafter"/>
</dbReference>
<dbReference type="GO" id="GO:0005524">
    <property type="term" value="F:ATP binding"/>
    <property type="evidence" value="ECO:0007669"/>
    <property type="project" value="UniProtKB-UniRule"/>
</dbReference>
<dbReference type="GO" id="GO:0016887">
    <property type="term" value="F:ATP hydrolysis activity"/>
    <property type="evidence" value="ECO:0007669"/>
    <property type="project" value="InterPro"/>
</dbReference>
<dbReference type="GO" id="GO:0140662">
    <property type="term" value="F:ATP-dependent protein folding chaperone"/>
    <property type="evidence" value="ECO:0007669"/>
    <property type="project" value="InterPro"/>
</dbReference>
<dbReference type="GO" id="GO:0046983">
    <property type="term" value="F:protein dimerization activity"/>
    <property type="evidence" value="ECO:0007669"/>
    <property type="project" value="InterPro"/>
</dbReference>
<dbReference type="GO" id="GO:0051082">
    <property type="term" value="F:unfolded protein binding"/>
    <property type="evidence" value="ECO:0007669"/>
    <property type="project" value="UniProtKB-UniRule"/>
</dbReference>
<dbReference type="GO" id="GO:0008270">
    <property type="term" value="F:zinc ion binding"/>
    <property type="evidence" value="ECO:0007669"/>
    <property type="project" value="InterPro"/>
</dbReference>
<dbReference type="GO" id="GO:0051301">
    <property type="term" value="P:cell division"/>
    <property type="evidence" value="ECO:0007669"/>
    <property type="project" value="TreeGrafter"/>
</dbReference>
<dbReference type="GO" id="GO:0051603">
    <property type="term" value="P:proteolysis involved in protein catabolic process"/>
    <property type="evidence" value="ECO:0007669"/>
    <property type="project" value="TreeGrafter"/>
</dbReference>
<dbReference type="CDD" id="cd19497">
    <property type="entry name" value="RecA-like_ClpX"/>
    <property type="match status" value="1"/>
</dbReference>
<dbReference type="FunFam" id="1.10.8.60:FF:000002">
    <property type="entry name" value="ATP-dependent Clp protease ATP-binding subunit ClpX"/>
    <property type="match status" value="1"/>
</dbReference>
<dbReference type="FunFam" id="3.40.50.300:FF:000005">
    <property type="entry name" value="ATP-dependent Clp protease ATP-binding subunit ClpX"/>
    <property type="match status" value="1"/>
</dbReference>
<dbReference type="Gene3D" id="1.10.8.60">
    <property type="match status" value="1"/>
</dbReference>
<dbReference type="Gene3D" id="6.20.220.10">
    <property type="entry name" value="ClpX chaperone, C4-type zinc finger domain"/>
    <property type="match status" value="1"/>
</dbReference>
<dbReference type="Gene3D" id="3.40.50.300">
    <property type="entry name" value="P-loop containing nucleotide triphosphate hydrolases"/>
    <property type="match status" value="1"/>
</dbReference>
<dbReference type="HAMAP" id="MF_00175">
    <property type="entry name" value="ClpX"/>
    <property type="match status" value="1"/>
</dbReference>
<dbReference type="InterPro" id="IPR003593">
    <property type="entry name" value="AAA+_ATPase"/>
</dbReference>
<dbReference type="InterPro" id="IPR050052">
    <property type="entry name" value="ATP-dep_Clp_protease_ClpX"/>
</dbReference>
<dbReference type="InterPro" id="IPR003959">
    <property type="entry name" value="ATPase_AAA_core"/>
</dbReference>
<dbReference type="InterPro" id="IPR019489">
    <property type="entry name" value="Clp_ATPase_C"/>
</dbReference>
<dbReference type="InterPro" id="IPR004487">
    <property type="entry name" value="Clp_protease_ATP-bd_su_ClpX"/>
</dbReference>
<dbReference type="InterPro" id="IPR046425">
    <property type="entry name" value="ClpX_bact"/>
</dbReference>
<dbReference type="InterPro" id="IPR027417">
    <property type="entry name" value="P-loop_NTPase"/>
</dbReference>
<dbReference type="InterPro" id="IPR010603">
    <property type="entry name" value="Znf_CppX_C4"/>
</dbReference>
<dbReference type="InterPro" id="IPR038366">
    <property type="entry name" value="Znf_CppX_C4_sf"/>
</dbReference>
<dbReference type="NCBIfam" id="TIGR00382">
    <property type="entry name" value="clpX"/>
    <property type="match status" value="1"/>
</dbReference>
<dbReference type="NCBIfam" id="NF003745">
    <property type="entry name" value="PRK05342.1"/>
    <property type="match status" value="1"/>
</dbReference>
<dbReference type="PANTHER" id="PTHR48102:SF7">
    <property type="entry name" value="ATP-DEPENDENT CLP PROTEASE ATP-BINDING SUBUNIT CLPX-LIKE, MITOCHONDRIAL"/>
    <property type="match status" value="1"/>
</dbReference>
<dbReference type="PANTHER" id="PTHR48102">
    <property type="entry name" value="ATP-DEPENDENT CLP PROTEASE ATP-BINDING SUBUNIT CLPX-LIKE, MITOCHONDRIAL-RELATED"/>
    <property type="match status" value="1"/>
</dbReference>
<dbReference type="Pfam" id="PF07724">
    <property type="entry name" value="AAA_2"/>
    <property type="match status" value="1"/>
</dbReference>
<dbReference type="Pfam" id="PF10431">
    <property type="entry name" value="ClpB_D2-small"/>
    <property type="match status" value="1"/>
</dbReference>
<dbReference type="Pfam" id="PF06689">
    <property type="entry name" value="zf-C4_ClpX"/>
    <property type="match status" value="1"/>
</dbReference>
<dbReference type="SMART" id="SM00382">
    <property type="entry name" value="AAA"/>
    <property type="match status" value="1"/>
</dbReference>
<dbReference type="SMART" id="SM01086">
    <property type="entry name" value="ClpB_D2-small"/>
    <property type="match status" value="1"/>
</dbReference>
<dbReference type="SMART" id="SM00994">
    <property type="entry name" value="zf-C4_ClpX"/>
    <property type="match status" value="1"/>
</dbReference>
<dbReference type="SUPFAM" id="SSF57716">
    <property type="entry name" value="Glucocorticoid receptor-like (DNA-binding domain)"/>
    <property type="match status" value="1"/>
</dbReference>
<dbReference type="SUPFAM" id="SSF52540">
    <property type="entry name" value="P-loop containing nucleoside triphosphate hydrolases"/>
    <property type="match status" value="1"/>
</dbReference>
<dbReference type="PROSITE" id="PS51902">
    <property type="entry name" value="CLPX_ZB"/>
    <property type="match status" value="1"/>
</dbReference>
<keyword id="KW-0067">ATP-binding</keyword>
<keyword id="KW-0143">Chaperone</keyword>
<keyword id="KW-0479">Metal-binding</keyword>
<keyword id="KW-0547">Nucleotide-binding</keyword>
<keyword id="KW-0862">Zinc</keyword>
<evidence type="ECO:0000255" key="1">
    <source>
        <dbReference type="HAMAP-Rule" id="MF_00175"/>
    </source>
</evidence>
<evidence type="ECO:0000255" key="2">
    <source>
        <dbReference type="PROSITE-ProRule" id="PRU01250"/>
    </source>
</evidence>
<protein>
    <recommendedName>
        <fullName evidence="1">ATP-dependent Clp protease ATP-binding subunit ClpX</fullName>
    </recommendedName>
</protein>